<sequence>MALAAARRVLLQAGSRLGRRGAVDGARRFSNKRVLVEKEGEAGIAVMKFKNPPVNSLSLEFLTEFVISLEKLENDKSIRGVILTSERPGIFSAGLDLMEMYGRNPAHYAEYWKAVQELWLRLYLSNLTLISAINGASPAGGCLMALTCDYRIMADNSKYTIGLNESLLGIVAPFWLKDNYVNTIGHRAAERALQLGTLFPPAEALKVGLVDEVVPEDQVHSKARSVMAKWFTIPDHSRQLTKSMMRKATADNLIKQREADIQNFTSFISRDSIQKSLHVYLEKLKQKKG</sequence>
<protein>
    <recommendedName>
        <fullName evidence="8">Enoyl-CoA delta isomerase 1, mitochondrial</fullName>
        <shortName evidence="6">MECI</shortName>
        <ecNumber evidence="3 5">5.3.3.8</ecNumber>
    </recommendedName>
    <alternativeName>
        <fullName evidence="7">3,2-trans-enoyl-CoA isomerase</fullName>
    </alternativeName>
    <alternativeName>
        <fullName evidence="6">Delta(3),Delta(2)-enoyl-CoA isomerase</fullName>
        <shortName evidence="6">D3,D2-enoyl-CoA isomerase</shortName>
    </alternativeName>
    <alternativeName>
        <fullName>Dodecenoyl-CoA isomerase</fullName>
    </alternativeName>
</protein>
<feature type="transit peptide" description="Mitochondrion">
    <location>
        <begin position="1"/>
        <end position="28"/>
    </location>
</feature>
<feature type="chain" id="PRO_0000007422" description="Enoyl-CoA delta isomerase 1, mitochondrial">
    <location>
        <begin position="29"/>
        <end position="289"/>
    </location>
</feature>
<feature type="binding site" evidence="2">
    <location>
        <begin position="93"/>
        <end position="97"/>
    </location>
    <ligand>
        <name>substrate</name>
    </ligand>
</feature>
<feature type="binding site" evidence="2">
    <location>
        <position position="140"/>
    </location>
    <ligand>
        <name>substrate</name>
    </ligand>
</feature>
<feature type="binding site" evidence="2">
    <location>
        <position position="164"/>
    </location>
    <ligand>
        <name>substrate</name>
    </ligand>
</feature>
<feature type="site" description="Important for catalytic activity" evidence="2">
    <location>
        <position position="165"/>
    </location>
</feature>
<feature type="modified residue" description="N6-acetyllysine; alternate" evidence="1">
    <location>
        <position position="48"/>
    </location>
</feature>
<feature type="modified residue" description="N6-succinyllysine; alternate" evidence="1">
    <location>
        <position position="48"/>
    </location>
</feature>
<feature type="modified residue" description="N6-succinyllysine" evidence="1">
    <location>
        <position position="71"/>
    </location>
</feature>
<feature type="modified residue" description="N6-acetyllysine" evidence="2">
    <location>
        <position position="76"/>
    </location>
</feature>
<feature type="modified residue" description="N6-acetyllysine; alternate" evidence="1">
    <location>
        <position position="222"/>
    </location>
</feature>
<feature type="modified residue" description="N6-succinyllysine; alternate" evidence="1">
    <location>
        <position position="222"/>
    </location>
</feature>
<feature type="modified residue" description="N6-acetyllysine; alternate" evidence="1">
    <location>
        <position position="229"/>
    </location>
</feature>
<feature type="modified residue" description="N6-succinyllysine; alternate" evidence="1">
    <location>
        <position position="229"/>
    </location>
</feature>
<feature type="modified residue" description="N6-acetyllysine; alternate" evidence="1">
    <location>
        <position position="255"/>
    </location>
</feature>
<feature type="modified residue" description="N6-succinyllysine; alternate" evidence="1">
    <location>
        <position position="255"/>
    </location>
</feature>
<feature type="modified residue" description="N6-succinyllysine" evidence="1">
    <location>
        <position position="275"/>
    </location>
</feature>
<feature type="modified residue" description="N6-acetyllysine; alternate" evidence="1">
    <location>
        <position position="283"/>
    </location>
</feature>
<feature type="modified residue" description="N6-succinyllysine; alternate" evidence="1">
    <location>
        <position position="283"/>
    </location>
</feature>
<feature type="mutagenesis site" description="Loss of activity." evidence="5">
    <original>E</original>
    <variation>Q</variation>
    <location>
        <position position="165"/>
    </location>
</feature>
<feature type="sequence conflict" description="In Ref. 2; AA sequence." evidence="8" ref="2">
    <original>MALAAARR</original>
    <variation>AGCCAC</variation>
    <location>
        <begin position="1"/>
        <end position="8"/>
    </location>
</feature>
<feature type="sequence conflict" description="In Ref. 2; AAA41073." evidence="8" ref="2">
    <original>D</original>
    <variation>N</variation>
    <location>
        <position position="260"/>
    </location>
</feature>
<feature type="strand" evidence="12">
    <location>
        <begin position="32"/>
        <end position="37"/>
    </location>
</feature>
<feature type="strand" evidence="12">
    <location>
        <begin position="44"/>
        <end position="49"/>
    </location>
</feature>
<feature type="turn" evidence="12">
    <location>
        <begin position="52"/>
        <end position="55"/>
    </location>
</feature>
<feature type="helix" evidence="12">
    <location>
        <begin position="59"/>
        <end position="74"/>
    </location>
</feature>
<feature type="strand" evidence="12">
    <location>
        <begin position="80"/>
        <end position="87"/>
    </location>
</feature>
<feature type="strand" evidence="12">
    <location>
        <begin position="89"/>
        <end position="91"/>
    </location>
</feature>
<feature type="helix" evidence="12">
    <location>
        <begin position="97"/>
        <end position="100"/>
    </location>
</feature>
<feature type="helix" evidence="12">
    <location>
        <begin position="105"/>
        <end position="123"/>
    </location>
</feature>
<feature type="strand" evidence="12">
    <location>
        <begin position="126"/>
        <end position="133"/>
    </location>
</feature>
<feature type="strand" evidence="12">
    <location>
        <begin position="135"/>
        <end position="138"/>
    </location>
</feature>
<feature type="helix" evidence="12">
    <location>
        <begin position="139"/>
        <end position="147"/>
    </location>
</feature>
<feature type="strand" evidence="12">
    <location>
        <begin position="148"/>
        <end position="154"/>
    </location>
</feature>
<feature type="helix" evidence="12">
    <location>
        <begin position="165"/>
        <end position="168"/>
    </location>
</feature>
<feature type="helix" evidence="12">
    <location>
        <begin position="174"/>
        <end position="184"/>
    </location>
</feature>
<feature type="helix" evidence="12">
    <location>
        <begin position="186"/>
        <end position="195"/>
    </location>
</feature>
<feature type="helix" evidence="12">
    <location>
        <begin position="201"/>
        <end position="206"/>
    </location>
</feature>
<feature type="strand" evidence="12">
    <location>
        <begin position="209"/>
        <end position="214"/>
    </location>
</feature>
<feature type="helix" evidence="12">
    <location>
        <begin position="216"/>
        <end position="218"/>
    </location>
</feature>
<feature type="helix" evidence="12">
    <location>
        <begin position="219"/>
        <end position="230"/>
    </location>
</feature>
<feature type="helix" evidence="12">
    <location>
        <begin position="235"/>
        <end position="254"/>
    </location>
</feature>
<feature type="helix" evidence="12">
    <location>
        <begin position="257"/>
        <end position="269"/>
    </location>
</feature>
<feature type="helix" evidence="12">
    <location>
        <begin position="271"/>
        <end position="282"/>
    </location>
</feature>
<reference key="1">
    <citation type="journal article" date="1991" name="Biol. Chem. Hoppe-Seyler">
        <title>Mitochondrial 3-2trans-Enoyl-CoA isomerase. Purification, cloning, expression, and mitochondrial import of the key enzyme of unsaturated fatty acid beta-oxidation.</title>
        <authorList>
            <person name="Mueller-Newen G."/>
            <person name="Stoffel W."/>
        </authorList>
    </citation>
    <scope>NUCLEOTIDE SEQUENCE [MRNA]</scope>
    <scope>PARTIAL PROTEIN SEQUENCE</scope>
    <source>
        <tissue>Liver</tissue>
    </source>
</reference>
<reference key="2">
    <citation type="journal article" date="1991" name="J. Biol. Chem.">
        <title>Amino acid sequence similarities of the mitochondrial short chain delta 3, delta 2-enoyl-CoA isomerase and peroxisomal multifunctional delta 3, delta 2-enoyl-CoA isomerase, 2-enoyl-CoA hydratase, 3-hydroxyacyl-CoA dehydrogenase enzyme in rat liver. The proposed occurrence of isomerization and hydration in the same catalytic domain of the multifunctional enzyme.</title>
        <authorList>
            <person name="Palosaari P.M."/>
            <person name="Vihinen M."/>
            <person name="Maentsaelae P.I."/>
            <person name="Alexson S.E."/>
            <person name="Pihlajaniemi T."/>
            <person name="Hiltunen J.K."/>
        </authorList>
    </citation>
    <scope>NUCLEOTIDE SEQUENCE [MRNA]</scope>
    <scope>PARTIAL PROTEIN SEQUENCE</scope>
    <source>
        <tissue>Liver</tissue>
    </source>
</reference>
<reference key="3">
    <citation type="journal article" date="1993" name="Biochemistry">
        <title>Site-directed mutagenesis of putative active-site amino acid residues of 3,2-trans-enoyl-CoA isomerase, conserved within the low-homology isomerase/hydratase enzyme family.</title>
        <authorList>
            <person name="Mueller-Newen G."/>
            <person name="Stoffel W."/>
        </authorList>
    </citation>
    <scope>MUTAGENESIS OF GLU-165</scope>
    <scope>FUNCTION</scope>
    <scope>CATALYTIC ACTIVITY</scope>
</reference>
<reference key="4">
    <citation type="journal article" date="2002" name="J. Biol. Chem.">
        <title>Functional characterization of delta3,delta2-enoyl-CoA isomerases from rat liver.</title>
        <authorList>
            <person name="Zhang D."/>
            <person name="Yu W."/>
            <person name="Geisbrecht B.V."/>
            <person name="Gould S.J."/>
            <person name="Sprecher H."/>
            <person name="Schulz H."/>
        </authorList>
    </citation>
    <scope>FUNCTION</scope>
    <scope>CATALYTIC ACTIVITY</scope>
    <scope>TISSUE SPECIFICITY</scope>
    <scope>SUBCELLULAR LOCATION</scope>
    <scope>BIOPHYSICOCHEMICAL PROPERTIES</scope>
</reference>
<reference key="5">
    <citation type="journal article" date="2005" name="Protein Sci.">
        <title>Domain swapping in the low-similarity isomerase/hydratase superfamily: the crystal structure of rat mitochondrial delta3, delta2-enoyl-CoA isomerase.</title>
        <authorList>
            <person name="Hubbard P.A."/>
            <person name="Yu W."/>
            <person name="Schulz H."/>
            <person name="Kim J.-J.P."/>
        </authorList>
    </citation>
    <scope>X-RAY CRYSTALLOGRAPHY (2.2 ANGSTROMS) OF 29-289</scope>
    <scope>SUBUNIT</scope>
</reference>
<evidence type="ECO:0000250" key="1">
    <source>
        <dbReference type="UniProtKB" id="P42125"/>
    </source>
</evidence>
<evidence type="ECO:0000250" key="2">
    <source>
        <dbReference type="UniProtKB" id="P42126"/>
    </source>
</evidence>
<evidence type="ECO:0000269" key="3">
    <source>
    </source>
</evidence>
<evidence type="ECO:0000269" key="4">
    <source>
    </source>
</evidence>
<evidence type="ECO:0000269" key="5">
    <source>
    </source>
</evidence>
<evidence type="ECO:0000303" key="6">
    <source>
    </source>
</evidence>
<evidence type="ECO:0000303" key="7">
    <source>
    </source>
</evidence>
<evidence type="ECO:0000305" key="8"/>
<evidence type="ECO:0000305" key="9">
    <source>
    </source>
</evidence>
<evidence type="ECO:0000305" key="10">
    <source>
    </source>
</evidence>
<evidence type="ECO:0000312" key="11">
    <source>
        <dbReference type="RGD" id="61892"/>
    </source>
</evidence>
<evidence type="ECO:0007829" key="12">
    <source>
        <dbReference type="PDB" id="1XX4"/>
    </source>
</evidence>
<accession>P23965</accession>
<dbReference type="EC" id="5.3.3.8" evidence="3 5"/>
<dbReference type="EMBL" id="X61184">
    <property type="protein sequence ID" value="CAA43488.1"/>
    <property type="molecule type" value="mRNA"/>
</dbReference>
<dbReference type="EMBL" id="M61112">
    <property type="protein sequence ID" value="AAA41073.1"/>
    <property type="molecule type" value="mRNA"/>
</dbReference>
<dbReference type="PIR" id="S17161">
    <property type="entry name" value="S17161"/>
</dbReference>
<dbReference type="PDB" id="1XX4">
    <property type="method" value="X-ray"/>
    <property type="resolution" value="2.20 A"/>
    <property type="chains" value="A=29-289"/>
</dbReference>
<dbReference type="PDBsum" id="1XX4"/>
<dbReference type="SMR" id="P23965"/>
<dbReference type="FunCoup" id="P23965">
    <property type="interactions" value="1054"/>
</dbReference>
<dbReference type="IntAct" id="P23965">
    <property type="interactions" value="1"/>
</dbReference>
<dbReference type="STRING" id="10116.ENSRNOP00000011784"/>
<dbReference type="SwissLipids" id="SLP:000001593"/>
<dbReference type="iPTMnet" id="P23965"/>
<dbReference type="PhosphoSitePlus" id="P23965"/>
<dbReference type="SwissPalm" id="P23965"/>
<dbReference type="jPOST" id="P23965"/>
<dbReference type="PaxDb" id="10116-ENSRNOP00000011784"/>
<dbReference type="UCSC" id="RGD:61892">
    <property type="organism name" value="rat"/>
</dbReference>
<dbReference type="AGR" id="RGD:61892"/>
<dbReference type="RGD" id="61892">
    <property type="gene designation" value="Eci1"/>
</dbReference>
<dbReference type="eggNOG" id="KOG1683">
    <property type="taxonomic scope" value="Eukaryota"/>
</dbReference>
<dbReference type="InParanoid" id="P23965"/>
<dbReference type="OrthoDB" id="1696280at2759"/>
<dbReference type="PhylomeDB" id="P23965"/>
<dbReference type="BRENDA" id="5.3.3.8">
    <property type="organism ID" value="5301"/>
</dbReference>
<dbReference type="Reactome" id="R-RNO-77288">
    <property type="pathway name" value="mitochondrial fatty acid beta-oxidation of unsaturated fatty acids"/>
</dbReference>
<dbReference type="Reactome" id="R-RNO-9837999">
    <property type="pathway name" value="Mitochondrial protein degradation"/>
</dbReference>
<dbReference type="SABIO-RK" id="P23965"/>
<dbReference type="UniPathway" id="UPA00659"/>
<dbReference type="EvolutionaryTrace" id="P23965"/>
<dbReference type="PRO" id="PR:P23965"/>
<dbReference type="Proteomes" id="UP000002494">
    <property type="component" value="Unplaced"/>
</dbReference>
<dbReference type="GO" id="GO:0005759">
    <property type="term" value="C:mitochondrial matrix"/>
    <property type="evidence" value="ECO:0007669"/>
    <property type="project" value="UniProtKB-SubCell"/>
</dbReference>
<dbReference type="GO" id="GO:0005739">
    <property type="term" value="C:mitochondrion"/>
    <property type="evidence" value="ECO:0000314"/>
    <property type="project" value="UniProtKB"/>
</dbReference>
<dbReference type="GO" id="GO:0004165">
    <property type="term" value="F:delta(3)-delta(2)-enoyl-CoA isomerase activity"/>
    <property type="evidence" value="ECO:0000314"/>
    <property type="project" value="UniProtKB"/>
</dbReference>
<dbReference type="GO" id="GO:0042802">
    <property type="term" value="F:identical protein binding"/>
    <property type="evidence" value="ECO:0000314"/>
    <property type="project" value="RGD"/>
</dbReference>
<dbReference type="GO" id="GO:0016863">
    <property type="term" value="F:intramolecular oxidoreductase activity, transposing C=C bonds"/>
    <property type="evidence" value="ECO:0000314"/>
    <property type="project" value="UniProtKB"/>
</dbReference>
<dbReference type="GO" id="GO:0006635">
    <property type="term" value="P:fatty acid beta-oxidation"/>
    <property type="evidence" value="ECO:0000314"/>
    <property type="project" value="UniProtKB"/>
</dbReference>
<dbReference type="CDD" id="cd06558">
    <property type="entry name" value="crotonase-like"/>
    <property type="match status" value="1"/>
</dbReference>
<dbReference type="FunFam" id="3.90.226.10:FF:000034">
    <property type="entry name" value="Enoyl-CoA delta isomerase 1"/>
    <property type="match status" value="1"/>
</dbReference>
<dbReference type="Gene3D" id="6.10.250.170">
    <property type="match status" value="1"/>
</dbReference>
<dbReference type="Gene3D" id="3.90.226.10">
    <property type="entry name" value="2-enoyl-CoA Hydratase, Chain A, domain 1"/>
    <property type="match status" value="1"/>
</dbReference>
<dbReference type="InterPro" id="IPR029045">
    <property type="entry name" value="ClpP/crotonase-like_dom_sf"/>
</dbReference>
<dbReference type="InterPro" id="IPR018376">
    <property type="entry name" value="Enoyl-CoA_hyd/isom_CS"/>
</dbReference>
<dbReference type="InterPro" id="IPR001753">
    <property type="entry name" value="Enoyl-CoA_hydra/iso"/>
</dbReference>
<dbReference type="PANTHER" id="PTHR11941:SF45">
    <property type="entry name" value="ENOYL-COA DELTA ISOMERASE 1, MITOCHONDRIAL"/>
    <property type="match status" value="1"/>
</dbReference>
<dbReference type="PANTHER" id="PTHR11941">
    <property type="entry name" value="ENOYL-COA HYDRATASE-RELATED"/>
    <property type="match status" value="1"/>
</dbReference>
<dbReference type="Pfam" id="PF00378">
    <property type="entry name" value="ECH_1"/>
    <property type="match status" value="1"/>
</dbReference>
<dbReference type="SUPFAM" id="SSF52096">
    <property type="entry name" value="ClpP/crotonase"/>
    <property type="match status" value="1"/>
</dbReference>
<dbReference type="PROSITE" id="PS00166">
    <property type="entry name" value="ENOYL_COA_HYDRATASE"/>
    <property type="match status" value="1"/>
</dbReference>
<keyword id="KW-0002">3D-structure</keyword>
<keyword id="KW-0007">Acetylation</keyword>
<keyword id="KW-0903">Direct protein sequencing</keyword>
<keyword id="KW-0276">Fatty acid metabolism</keyword>
<keyword id="KW-0413">Isomerase</keyword>
<keyword id="KW-0443">Lipid metabolism</keyword>
<keyword id="KW-0496">Mitochondrion</keyword>
<keyword id="KW-1185">Reference proteome</keyword>
<keyword id="KW-0809">Transit peptide</keyword>
<gene>
    <name evidence="11" type="primary">Eci1</name>
    <name type="synonym">Dci</name>
</gene>
<organism>
    <name type="scientific">Rattus norvegicus</name>
    <name type="common">Rat</name>
    <dbReference type="NCBI Taxonomy" id="10116"/>
    <lineage>
        <taxon>Eukaryota</taxon>
        <taxon>Metazoa</taxon>
        <taxon>Chordata</taxon>
        <taxon>Craniata</taxon>
        <taxon>Vertebrata</taxon>
        <taxon>Euteleostomi</taxon>
        <taxon>Mammalia</taxon>
        <taxon>Eutheria</taxon>
        <taxon>Euarchontoglires</taxon>
        <taxon>Glires</taxon>
        <taxon>Rodentia</taxon>
        <taxon>Myomorpha</taxon>
        <taxon>Muroidea</taxon>
        <taxon>Muridae</taxon>
        <taxon>Murinae</taxon>
        <taxon>Rattus</taxon>
    </lineage>
</organism>
<comment type="function">
    <text evidence="3 5 9 10">Key enzyme of fatty acid beta-oxidation (Probable). Able to isomerize both 3-cis (3Z) and 3-trans (3E) double bonds into the 2-trans (2E) form in a range of enoyl-CoA species, with a preference for (3Z)-enoyl-CoAs over (3E)-enoyl-CoAs (PubMed:11781327, PubMed:8218206). The catalytic efficiency of this enzyme is not affected by the fatty acyl chain length (PubMed:11781327).</text>
</comment>
<comment type="catalytic activity">
    <reaction evidence="5">
        <text>a (3Z)-enoyl-CoA = a 4-saturated (2E)-enoyl-CoA</text>
        <dbReference type="Rhea" id="RHEA:45900"/>
        <dbReference type="ChEBI" id="CHEBI:85097"/>
        <dbReference type="ChEBI" id="CHEBI:85489"/>
        <dbReference type="EC" id="5.3.3.8"/>
    </reaction>
    <physiologicalReaction direction="left-to-right" evidence="10">
        <dbReference type="Rhea" id="RHEA:45901"/>
    </physiologicalReaction>
</comment>
<comment type="catalytic activity">
    <reaction evidence="5">
        <text>a (3E)-enoyl-CoA = a 4-saturated (2E)-enoyl-CoA</text>
        <dbReference type="Rhea" id="RHEA:45228"/>
        <dbReference type="ChEBI" id="CHEBI:58521"/>
        <dbReference type="ChEBI" id="CHEBI:85097"/>
        <dbReference type="EC" id="5.3.3.8"/>
    </reaction>
    <physiologicalReaction direction="left-to-right" evidence="10">
        <dbReference type="Rhea" id="RHEA:45229"/>
    </physiologicalReaction>
</comment>
<comment type="catalytic activity">
    <reaction evidence="3">
        <text>(3Z)-octenoyl-CoA = (2E)-octenoyl-CoA</text>
        <dbReference type="Rhea" id="RHEA:46044"/>
        <dbReference type="ChEBI" id="CHEBI:62242"/>
        <dbReference type="ChEBI" id="CHEBI:85640"/>
    </reaction>
    <physiologicalReaction direction="left-to-right" evidence="3">
        <dbReference type="Rhea" id="RHEA:46045"/>
    </physiologicalReaction>
</comment>
<comment type="catalytic activity">
    <reaction evidence="3">
        <text>(2E)-tetradecenoyl-CoA = (3Z)-tetradecenoyl-CoA</text>
        <dbReference type="Rhea" id="RHEA:29847"/>
        <dbReference type="ChEBI" id="CHEBI:61405"/>
        <dbReference type="ChEBI" id="CHEBI:61968"/>
    </reaction>
    <physiologicalReaction direction="right-to-left" evidence="3">
        <dbReference type="Rhea" id="RHEA:29849"/>
    </physiologicalReaction>
</comment>
<comment type="catalytic activity">
    <reaction evidence="9">
        <text>(3Z)-dodecenoyl-CoA = (2E)-dodecenoyl-CoA</text>
        <dbReference type="Rhea" id="RHEA:23716"/>
        <dbReference type="ChEBI" id="CHEBI:57330"/>
        <dbReference type="ChEBI" id="CHEBI:58543"/>
        <dbReference type="EC" id="5.3.3.8"/>
    </reaction>
    <physiologicalReaction direction="left-to-right" evidence="9">
        <dbReference type="Rhea" id="RHEA:23717"/>
    </physiologicalReaction>
</comment>
<comment type="catalytic activity">
    <reaction evidence="3">
        <text>(3Z)-hexenoyl-CoA = (2E)-hexenoyl-CoA</text>
        <dbReference type="Rhea" id="RHEA:45748"/>
        <dbReference type="ChEBI" id="CHEBI:62077"/>
        <dbReference type="ChEBI" id="CHEBI:85415"/>
    </reaction>
    <physiologicalReaction direction="left-to-right" evidence="3">
        <dbReference type="Rhea" id="RHEA:45749"/>
    </physiologicalReaction>
</comment>
<comment type="catalytic activity">
    <reaction evidence="9">
        <text>(3Z)-decenoyl-CoA = (2E)-decenoyl-CoA</text>
        <dbReference type="Rhea" id="RHEA:77195"/>
        <dbReference type="ChEBI" id="CHEBI:61406"/>
        <dbReference type="ChEBI" id="CHEBI:195601"/>
    </reaction>
    <physiologicalReaction direction="left-to-right" evidence="9">
        <dbReference type="Rhea" id="RHEA:77196"/>
    </physiologicalReaction>
</comment>
<comment type="biophysicochemical properties">
    <kinetics>
        <KM evidence="3">470 uM for (3Z)-hexenoyl-CoA</KM>
        <KM evidence="3">190 uM for (3Z)-octenoyl-CoA</KM>
        <KM evidence="3">48 uM for (3Z)-tetradecenoyl-CoA</KM>
        <KM evidence="3">240 uM for (3E)-hexenoyl-CoA</KM>
        <KM evidence="3">150 uM for (3E)-octenoyl-CoA</KM>
        <KM evidence="3">57 uM for (3E)-tetradecenoyl-CoA</KM>
        <text evidence="3">kcat are 270 sec(-1), 25 sec(-1), 20 sec(-1), 200 sec(-1), 180 sec(-1) and 98 sec(-1) for (3Z)-hexenoyl-CoA, (3Z)-octenoyl-CoA, (3Z)-tetradecenoyl-CoA, (3E)-hexenoyl-CoA, (3E)-octenoyl-CoA and (3E)-tetradecenoyl-CoA, respectively.</text>
    </kinetics>
</comment>
<comment type="pathway">
    <text evidence="3 5">Lipid metabolism; fatty acid beta-oxidation.</text>
</comment>
<comment type="subunit">
    <text evidence="4">Homotrimer.</text>
</comment>
<comment type="subcellular location">
    <subcellularLocation>
        <location evidence="3">Mitochondrion matrix</location>
    </subcellularLocation>
</comment>
<comment type="similarity">
    <text evidence="8">Belongs to the enoyl-CoA hydratase/isomerase family.</text>
</comment>
<proteinExistence type="evidence at protein level"/>
<name>ECI1_RAT</name>